<name>AL1A1_MESAU</name>
<comment type="function">
    <text evidence="1 4">Cytosolic dehydrogenase that catalyzes the irreversible oxidation of a wide range of aldehydes to their corresponding carboxylic acid (By similarity). Functions downstream of retinol dehydrogenases and catalyzes the oxidation of retinaldehyde into retinoic acid, the second step in the oxidation of retinol/vitamin A into retinoic acid. This pathway is crucial to control the levels of retinol and retinoic acid, two important molecules which excess can be teratogenic and cytotoxic (By similarity). Also oxidizes aldehydes resulting from lipid peroxidation like (E)-4-hydroxynon-2-enal/HNE, malonaldehyde and hexanal that form protein adducts and are highly cytotoxic. By participating for instance to the clearance of (E)-4-hydroxynon-2-enal/HNE in the lens epithelium prevents the formation of HNE-protein adducts and lens opacification. Also functions downstream of fructosamine-3-kinase in the fructosamine degradation pathway by catalyzing the oxidation of 3-deoxyglucosone, the carbohydrate product of fructosamine 3-phosphate decomposition, which is itself a potent glycating agent that may react with lysine and arginine side-chains of proteins (By similarity). Also has an aminobutyraldehyde dehydrogenase activity and is probably part of an alternative pathway for the biosynthesis of GABA/4-aminobutanoate in midbrain, thereby playing a role in GABAergic synaptic transmission (By similarity).</text>
</comment>
<comment type="catalytic activity">
    <reaction evidence="1">
        <text>an aldehyde + NAD(+) + H2O = a carboxylate + NADH + 2 H(+)</text>
        <dbReference type="Rhea" id="RHEA:16185"/>
        <dbReference type="ChEBI" id="CHEBI:15377"/>
        <dbReference type="ChEBI" id="CHEBI:15378"/>
        <dbReference type="ChEBI" id="CHEBI:17478"/>
        <dbReference type="ChEBI" id="CHEBI:29067"/>
        <dbReference type="ChEBI" id="CHEBI:57540"/>
        <dbReference type="ChEBI" id="CHEBI:57945"/>
        <dbReference type="EC" id="1.2.1.3"/>
    </reaction>
    <physiologicalReaction direction="left-to-right" evidence="1">
        <dbReference type="Rhea" id="RHEA:16186"/>
    </physiologicalReaction>
</comment>
<comment type="catalytic activity">
    <reaction evidence="5">
        <text>all-trans-retinal + NAD(+) + H2O = all-trans-retinoate + NADH + 2 H(+)</text>
        <dbReference type="Rhea" id="RHEA:42080"/>
        <dbReference type="ChEBI" id="CHEBI:15377"/>
        <dbReference type="ChEBI" id="CHEBI:15378"/>
        <dbReference type="ChEBI" id="CHEBI:17898"/>
        <dbReference type="ChEBI" id="CHEBI:35291"/>
        <dbReference type="ChEBI" id="CHEBI:57540"/>
        <dbReference type="ChEBI" id="CHEBI:57945"/>
        <dbReference type="EC" id="1.2.1.36"/>
    </reaction>
    <physiologicalReaction direction="left-to-right" evidence="5">
        <dbReference type="Rhea" id="RHEA:42081"/>
    </physiologicalReaction>
</comment>
<comment type="catalytic activity">
    <reaction evidence="5">
        <text>9-cis-retinal + NAD(+) + H2O = 9-cis-retinoate + NADH + 2 H(+)</text>
        <dbReference type="Rhea" id="RHEA:42084"/>
        <dbReference type="ChEBI" id="CHEBI:15377"/>
        <dbReference type="ChEBI" id="CHEBI:15378"/>
        <dbReference type="ChEBI" id="CHEBI:57540"/>
        <dbReference type="ChEBI" id="CHEBI:57945"/>
        <dbReference type="ChEBI" id="CHEBI:78273"/>
        <dbReference type="ChEBI" id="CHEBI:78630"/>
    </reaction>
    <physiologicalReaction direction="left-to-right" evidence="5">
        <dbReference type="Rhea" id="RHEA:42085"/>
    </physiologicalReaction>
</comment>
<comment type="catalytic activity">
    <reaction evidence="5">
        <text>11-cis-retinal + NAD(+) + H2O = 11-cis-retinoate + NADH + 2 H(+)</text>
        <dbReference type="Rhea" id="RHEA:47132"/>
        <dbReference type="ChEBI" id="CHEBI:15377"/>
        <dbReference type="ChEBI" id="CHEBI:15378"/>
        <dbReference type="ChEBI" id="CHEBI:16066"/>
        <dbReference type="ChEBI" id="CHEBI:57540"/>
        <dbReference type="ChEBI" id="CHEBI:57945"/>
        <dbReference type="ChEBI" id="CHEBI:87435"/>
    </reaction>
    <physiologicalReaction direction="left-to-right" evidence="5">
        <dbReference type="Rhea" id="RHEA:47133"/>
    </physiologicalReaction>
</comment>
<comment type="catalytic activity">
    <reaction evidence="7">
        <text>13-cis-retinal + NAD(+) + H2O = 13-cis-retinoate + NADH + 2 H(+)</text>
        <dbReference type="Rhea" id="RHEA:67332"/>
        <dbReference type="ChEBI" id="CHEBI:15377"/>
        <dbReference type="ChEBI" id="CHEBI:15378"/>
        <dbReference type="ChEBI" id="CHEBI:45487"/>
        <dbReference type="ChEBI" id="CHEBI:57540"/>
        <dbReference type="ChEBI" id="CHEBI:57945"/>
        <dbReference type="ChEBI" id="CHEBI:169952"/>
    </reaction>
    <physiologicalReaction direction="left-to-right" evidence="7">
        <dbReference type="Rhea" id="RHEA:67333"/>
    </physiologicalReaction>
</comment>
<comment type="catalytic activity">
    <reaction evidence="1">
        <text>3-deoxyglucosone + NAD(+) + H2O = 2-dehydro-3-deoxy-D-gluconate + NADH + 2 H(+)</text>
        <dbReference type="Rhea" id="RHEA:67244"/>
        <dbReference type="ChEBI" id="CHEBI:15377"/>
        <dbReference type="ChEBI" id="CHEBI:15378"/>
        <dbReference type="ChEBI" id="CHEBI:57540"/>
        <dbReference type="ChEBI" id="CHEBI:57945"/>
        <dbReference type="ChEBI" id="CHEBI:57990"/>
        <dbReference type="ChEBI" id="CHEBI:60777"/>
    </reaction>
    <physiologicalReaction direction="left-to-right" evidence="1">
        <dbReference type="Rhea" id="RHEA:67245"/>
    </physiologicalReaction>
</comment>
<comment type="catalytic activity">
    <reaction evidence="1">
        <text>(E)-4-hydroxynon-2-enal + NAD(+) + H2O = (E)-4-hydroxynon-2-enoate + NADH + 2 H(+)</text>
        <dbReference type="Rhea" id="RHEA:67248"/>
        <dbReference type="ChEBI" id="CHEBI:15377"/>
        <dbReference type="ChEBI" id="CHEBI:15378"/>
        <dbReference type="ChEBI" id="CHEBI:57540"/>
        <dbReference type="ChEBI" id="CHEBI:57945"/>
        <dbReference type="ChEBI" id="CHEBI:58968"/>
        <dbReference type="ChEBI" id="CHEBI:142920"/>
    </reaction>
    <physiologicalReaction direction="left-to-right" evidence="1">
        <dbReference type="Rhea" id="RHEA:67249"/>
    </physiologicalReaction>
</comment>
<comment type="catalytic activity">
    <reaction evidence="1">
        <text>malonaldehyde + NAD(+) + H2O = 3-oxopropanoate + NADH + 2 H(+)</text>
        <dbReference type="Rhea" id="RHEA:67252"/>
        <dbReference type="ChEBI" id="CHEBI:15377"/>
        <dbReference type="ChEBI" id="CHEBI:15378"/>
        <dbReference type="ChEBI" id="CHEBI:33190"/>
        <dbReference type="ChEBI" id="CHEBI:57540"/>
        <dbReference type="ChEBI" id="CHEBI:57945"/>
        <dbReference type="ChEBI" id="CHEBI:566274"/>
    </reaction>
    <physiologicalReaction direction="left-to-right" evidence="1">
        <dbReference type="Rhea" id="RHEA:67253"/>
    </physiologicalReaction>
</comment>
<comment type="catalytic activity">
    <reaction evidence="1">
        <text>hexanal + NAD(+) + H2O = hexanoate + NADH + 2 H(+)</text>
        <dbReference type="Rhea" id="RHEA:67276"/>
        <dbReference type="ChEBI" id="CHEBI:15377"/>
        <dbReference type="ChEBI" id="CHEBI:15378"/>
        <dbReference type="ChEBI" id="CHEBI:17120"/>
        <dbReference type="ChEBI" id="CHEBI:57540"/>
        <dbReference type="ChEBI" id="CHEBI:57945"/>
        <dbReference type="ChEBI" id="CHEBI:88528"/>
    </reaction>
    <physiologicalReaction direction="left-to-right" evidence="1">
        <dbReference type="Rhea" id="RHEA:67277"/>
    </physiologicalReaction>
</comment>
<comment type="catalytic activity">
    <reaction evidence="1">
        <text>propanal + NAD(+) + H2O = propanoate + NADH + 2 H(+)</text>
        <dbReference type="Rhea" id="RHEA:67256"/>
        <dbReference type="ChEBI" id="CHEBI:15377"/>
        <dbReference type="ChEBI" id="CHEBI:15378"/>
        <dbReference type="ChEBI" id="CHEBI:17153"/>
        <dbReference type="ChEBI" id="CHEBI:17272"/>
        <dbReference type="ChEBI" id="CHEBI:57540"/>
        <dbReference type="ChEBI" id="CHEBI:57945"/>
    </reaction>
    <physiologicalReaction direction="left-to-right" evidence="1">
        <dbReference type="Rhea" id="RHEA:67257"/>
    </physiologicalReaction>
</comment>
<comment type="catalytic activity">
    <reaction evidence="1">
        <text>acetaldehyde + NAD(+) + H2O = acetate + NADH + 2 H(+)</text>
        <dbReference type="Rhea" id="RHEA:25294"/>
        <dbReference type="ChEBI" id="CHEBI:15343"/>
        <dbReference type="ChEBI" id="CHEBI:15377"/>
        <dbReference type="ChEBI" id="CHEBI:15378"/>
        <dbReference type="ChEBI" id="CHEBI:30089"/>
        <dbReference type="ChEBI" id="CHEBI:57540"/>
        <dbReference type="ChEBI" id="CHEBI:57945"/>
        <dbReference type="EC" id="1.2.1.3"/>
    </reaction>
    <physiologicalReaction direction="left-to-right" evidence="1">
        <dbReference type="Rhea" id="RHEA:25295"/>
    </physiologicalReaction>
</comment>
<comment type="catalytic activity">
    <reaction evidence="1">
        <text>benzaldehyde + NAD(+) + H2O = benzoate + NADH + 2 H(+)</text>
        <dbReference type="Rhea" id="RHEA:11840"/>
        <dbReference type="ChEBI" id="CHEBI:15377"/>
        <dbReference type="ChEBI" id="CHEBI:15378"/>
        <dbReference type="ChEBI" id="CHEBI:16150"/>
        <dbReference type="ChEBI" id="CHEBI:17169"/>
        <dbReference type="ChEBI" id="CHEBI:57540"/>
        <dbReference type="ChEBI" id="CHEBI:57945"/>
        <dbReference type="EC" id="1.2.1.28"/>
    </reaction>
    <physiologicalReaction direction="left-to-right" evidence="1">
        <dbReference type="Rhea" id="RHEA:11841"/>
    </physiologicalReaction>
</comment>
<comment type="catalytic activity">
    <reaction evidence="4">
        <text>4-aminobutanal + NAD(+) + H2O = 4-aminobutanoate + NADH + 2 H(+)</text>
        <dbReference type="Rhea" id="RHEA:19105"/>
        <dbReference type="ChEBI" id="CHEBI:15377"/>
        <dbReference type="ChEBI" id="CHEBI:15378"/>
        <dbReference type="ChEBI" id="CHEBI:57540"/>
        <dbReference type="ChEBI" id="CHEBI:57945"/>
        <dbReference type="ChEBI" id="CHEBI:58264"/>
        <dbReference type="ChEBI" id="CHEBI:59888"/>
        <dbReference type="EC" id="1.2.1.19"/>
    </reaction>
    <physiologicalReaction direction="left-to-right" evidence="4">
        <dbReference type="Rhea" id="RHEA:19106"/>
    </physiologicalReaction>
</comment>
<comment type="pathway">
    <text evidence="5">Cofactor metabolism; retinol metabolism.</text>
</comment>
<comment type="subunit">
    <text evidence="1 6">Homotetramer (By similarity). Interacts with PRMT3; the interaction is direct, inhibits ALDH1A1 aldehyde dehydrogenase activity and is independent of the methyltransferase activity of PRMT3 (By similarity).</text>
</comment>
<comment type="subcellular location">
    <subcellularLocation>
        <location evidence="1">Cytoplasm</location>
        <location evidence="1">Cytosol</location>
    </subcellularLocation>
    <subcellularLocation>
        <location evidence="4">Cell projection</location>
        <location evidence="4">Axon</location>
    </subcellularLocation>
</comment>
<comment type="PTM">
    <text evidence="2">The N-terminus is blocked most probably by acetylation.</text>
</comment>
<comment type="similarity">
    <text evidence="8">Belongs to the aldehyde dehydrogenase family.</text>
</comment>
<protein>
    <recommendedName>
        <fullName evidence="1">Aldehyde dehydrogenase 1A1</fullName>
        <ecNumber evidence="4">1.2.1.19</ecNumber>
        <ecNumber evidence="1">1.2.1.28</ecNumber>
        <ecNumber evidence="1">1.2.1.3</ecNumber>
        <ecNumber evidence="5">1.2.1.36</ecNumber>
    </recommendedName>
    <alternativeName>
        <fullName evidence="1">3-deoxyglucosone dehydrogenase</fullName>
    </alternativeName>
    <alternativeName>
        <fullName>ALDH-E1</fullName>
    </alternativeName>
    <alternativeName>
        <fullName>ALHDII</fullName>
    </alternativeName>
    <alternativeName>
        <fullName>Aldehyde dehydrogenase family 1 member A1</fullName>
    </alternativeName>
    <alternativeName>
        <fullName evidence="1">Aldehyde dehydrogenase, cytosolic</fullName>
    </alternativeName>
    <alternativeName>
        <fullName evidence="11">Retinal dehydrogenase 1</fullName>
        <shortName evidence="11">RALDH 1</shortName>
        <shortName evidence="11">RalDH1</shortName>
    </alternativeName>
</protein>
<evidence type="ECO:0000250" key="1">
    <source>
        <dbReference type="UniProtKB" id="P00352"/>
    </source>
</evidence>
<evidence type="ECO:0000250" key="2">
    <source>
        <dbReference type="UniProtKB" id="P15437"/>
    </source>
</evidence>
<evidence type="ECO:0000250" key="3">
    <source>
        <dbReference type="UniProtKB" id="P20000"/>
    </source>
</evidence>
<evidence type="ECO:0000250" key="4">
    <source>
        <dbReference type="UniProtKB" id="P24549"/>
    </source>
</evidence>
<evidence type="ECO:0000250" key="5">
    <source>
        <dbReference type="UniProtKB" id="P51647"/>
    </source>
</evidence>
<evidence type="ECO:0000250" key="6">
    <source>
        <dbReference type="UniProtKB" id="P51977"/>
    </source>
</evidence>
<evidence type="ECO:0000250" key="7">
    <source>
        <dbReference type="UniProtKB" id="Q8HYE4"/>
    </source>
</evidence>
<evidence type="ECO:0000255" key="8"/>
<evidence type="ECO:0000255" key="9">
    <source>
        <dbReference type="PROSITE-ProRule" id="PRU10007"/>
    </source>
</evidence>
<evidence type="ECO:0000255" key="10">
    <source>
        <dbReference type="PROSITE-ProRule" id="PRU10008"/>
    </source>
</evidence>
<evidence type="ECO:0000305" key="11"/>
<organism>
    <name type="scientific">Mesocricetus auratus</name>
    <name type="common">Golden hamster</name>
    <dbReference type="NCBI Taxonomy" id="10036"/>
    <lineage>
        <taxon>Eukaryota</taxon>
        <taxon>Metazoa</taxon>
        <taxon>Chordata</taxon>
        <taxon>Craniata</taxon>
        <taxon>Vertebrata</taxon>
        <taxon>Euteleostomi</taxon>
        <taxon>Mammalia</taxon>
        <taxon>Eutheria</taxon>
        <taxon>Euarchontoglires</taxon>
        <taxon>Glires</taxon>
        <taxon>Rodentia</taxon>
        <taxon>Myomorpha</taxon>
        <taxon>Muroidea</taxon>
        <taxon>Cricetidae</taxon>
        <taxon>Cricetinae</taxon>
        <taxon>Mesocricetus</taxon>
    </lineage>
</organism>
<dbReference type="EC" id="1.2.1.19" evidence="4"/>
<dbReference type="EC" id="1.2.1.28" evidence="1"/>
<dbReference type="EC" id="1.2.1.3" evidence="1"/>
<dbReference type="EC" id="1.2.1.36" evidence="5"/>
<dbReference type="SMR" id="P86886"/>
<dbReference type="STRING" id="10036.ENSMAUP00000008919"/>
<dbReference type="GeneID" id="101822890"/>
<dbReference type="KEGG" id="maua:101822890"/>
<dbReference type="eggNOG" id="KOG2450">
    <property type="taxonomic scope" value="Eukaryota"/>
</dbReference>
<dbReference type="OrthoDB" id="310895at2759"/>
<dbReference type="UniPathway" id="UPA00912"/>
<dbReference type="Proteomes" id="UP000189706">
    <property type="component" value="Unplaced"/>
</dbReference>
<dbReference type="GO" id="GO:0030424">
    <property type="term" value="C:axon"/>
    <property type="evidence" value="ECO:0000250"/>
    <property type="project" value="UniProtKB"/>
</dbReference>
<dbReference type="GO" id="GO:0005829">
    <property type="term" value="C:cytosol"/>
    <property type="evidence" value="ECO:0000250"/>
    <property type="project" value="UniProtKB"/>
</dbReference>
<dbReference type="GO" id="GO:0045202">
    <property type="term" value="C:synapse"/>
    <property type="evidence" value="ECO:0000250"/>
    <property type="project" value="UniProtKB"/>
</dbReference>
<dbReference type="GO" id="GO:0106373">
    <property type="term" value="F:3-deoxyglucosone dehydrogenase activity"/>
    <property type="evidence" value="ECO:0000250"/>
    <property type="project" value="UniProtKB"/>
</dbReference>
<dbReference type="GO" id="GO:0140087">
    <property type="term" value="F:acetaldehyde dehydrogenase (NAD+) activity"/>
    <property type="evidence" value="ECO:0007669"/>
    <property type="project" value="RHEA"/>
</dbReference>
<dbReference type="GO" id="GO:0004029">
    <property type="term" value="F:aldehyde dehydrogenase (NAD+) activity"/>
    <property type="evidence" value="ECO:0000250"/>
    <property type="project" value="UniProtKB"/>
</dbReference>
<dbReference type="GO" id="GO:0019145">
    <property type="term" value="F:aminobutyraldehyde dehydrogenase (NAD+) activity"/>
    <property type="evidence" value="ECO:0000250"/>
    <property type="project" value="UniProtKB"/>
</dbReference>
<dbReference type="GO" id="GO:0018479">
    <property type="term" value="F:benzaldehyde dehydrogenase (NAD+) activity"/>
    <property type="evidence" value="ECO:0007669"/>
    <property type="project" value="RHEA"/>
</dbReference>
<dbReference type="GO" id="GO:0001758">
    <property type="term" value="F:retinal dehydrogenase activity"/>
    <property type="evidence" value="ECO:0000250"/>
    <property type="project" value="UniProtKB"/>
</dbReference>
<dbReference type="GO" id="GO:0110095">
    <property type="term" value="P:cellular detoxification of aldehyde"/>
    <property type="evidence" value="ECO:0000250"/>
    <property type="project" value="UniProtKB"/>
</dbReference>
<dbReference type="GO" id="GO:0030392">
    <property type="term" value="P:fructosamine catabolic process"/>
    <property type="evidence" value="ECO:0000250"/>
    <property type="project" value="UniProtKB"/>
</dbReference>
<dbReference type="GO" id="GO:0009449">
    <property type="term" value="P:gamma-aminobutyric acid biosynthetic process"/>
    <property type="evidence" value="ECO:0000250"/>
    <property type="project" value="UniProtKB"/>
</dbReference>
<dbReference type="GO" id="GO:0036438">
    <property type="term" value="P:maintenance of lens transparency"/>
    <property type="evidence" value="ECO:0000250"/>
    <property type="project" value="UniProtKB"/>
</dbReference>
<dbReference type="GO" id="GO:0001523">
    <property type="term" value="P:retinoid metabolic process"/>
    <property type="evidence" value="ECO:0000250"/>
    <property type="project" value="UniProtKB"/>
</dbReference>
<dbReference type="GO" id="GO:0042572">
    <property type="term" value="P:retinol metabolic process"/>
    <property type="evidence" value="ECO:0007669"/>
    <property type="project" value="UniProtKB-UniPathway"/>
</dbReference>
<dbReference type="CDD" id="cd07141">
    <property type="entry name" value="ALDH_F1AB_F2_RALDH1"/>
    <property type="match status" value="1"/>
</dbReference>
<dbReference type="FunFam" id="3.40.605.10:FF:000029">
    <property type="entry name" value="Aldehyde dehydrogenase, mitochondrial"/>
    <property type="match status" value="1"/>
</dbReference>
<dbReference type="FunFam" id="3.40.605.10:FF:000026">
    <property type="entry name" value="Aldehyde dehydrogenase, putative"/>
    <property type="match status" value="1"/>
</dbReference>
<dbReference type="FunFam" id="3.40.309.10:FF:000001">
    <property type="entry name" value="Mitochondrial aldehyde dehydrogenase 2"/>
    <property type="match status" value="1"/>
</dbReference>
<dbReference type="Gene3D" id="3.40.605.10">
    <property type="entry name" value="Aldehyde Dehydrogenase, Chain A, domain 1"/>
    <property type="match status" value="1"/>
</dbReference>
<dbReference type="Gene3D" id="3.40.309.10">
    <property type="entry name" value="Aldehyde Dehydrogenase, Chain A, domain 2"/>
    <property type="match status" value="1"/>
</dbReference>
<dbReference type="InterPro" id="IPR016161">
    <property type="entry name" value="Ald_DH/histidinol_DH"/>
</dbReference>
<dbReference type="InterPro" id="IPR016163">
    <property type="entry name" value="Ald_DH_C"/>
</dbReference>
<dbReference type="InterPro" id="IPR016160">
    <property type="entry name" value="Ald_DH_CS_CYS"/>
</dbReference>
<dbReference type="InterPro" id="IPR029510">
    <property type="entry name" value="Ald_DH_CS_GLU"/>
</dbReference>
<dbReference type="InterPro" id="IPR016162">
    <property type="entry name" value="Ald_DH_N"/>
</dbReference>
<dbReference type="InterPro" id="IPR015590">
    <property type="entry name" value="Aldehyde_DH_dom"/>
</dbReference>
<dbReference type="PANTHER" id="PTHR11699">
    <property type="entry name" value="ALDEHYDE DEHYDROGENASE-RELATED"/>
    <property type="match status" value="1"/>
</dbReference>
<dbReference type="Pfam" id="PF00171">
    <property type="entry name" value="Aldedh"/>
    <property type="match status" value="1"/>
</dbReference>
<dbReference type="SUPFAM" id="SSF53720">
    <property type="entry name" value="ALDH-like"/>
    <property type="match status" value="1"/>
</dbReference>
<dbReference type="PROSITE" id="PS00070">
    <property type="entry name" value="ALDEHYDE_DEHYDR_CYS"/>
    <property type="match status" value="1"/>
</dbReference>
<dbReference type="PROSITE" id="PS00687">
    <property type="entry name" value="ALDEHYDE_DEHYDR_GLU"/>
    <property type="match status" value="1"/>
</dbReference>
<accession>P86886</accession>
<keyword id="KW-0007">Acetylation</keyword>
<keyword id="KW-0966">Cell projection</keyword>
<keyword id="KW-0963">Cytoplasm</keyword>
<keyword id="KW-0903">Direct protein sequencing</keyword>
<keyword id="KW-0443">Lipid metabolism</keyword>
<keyword id="KW-0520">NAD</keyword>
<keyword id="KW-0560">Oxidoreductase</keyword>
<keyword id="KW-0597">Phosphoprotein</keyword>
<keyword id="KW-1185">Reference proteome</keyword>
<gene>
    <name evidence="1" type="primary">ALDH1A1</name>
</gene>
<feature type="initiator methionine" description="Removed" evidence="2">
    <location>
        <position position="1"/>
    </location>
</feature>
<feature type="chain" id="PRO_0000405309" description="Aldehyde dehydrogenase 1A1">
    <location>
        <begin position="2"/>
        <end position="501"/>
    </location>
</feature>
<feature type="region of interest" description="Mediates interaction with PRMT3" evidence="1">
    <location>
        <begin position="336"/>
        <end position="501"/>
    </location>
</feature>
<feature type="active site" description="Proton acceptor" evidence="9 10">
    <location>
        <position position="269"/>
    </location>
</feature>
<feature type="active site" description="Nucleophile" evidence="9 10">
    <location>
        <position position="303"/>
    </location>
</feature>
<feature type="binding site" evidence="1">
    <location>
        <begin position="167"/>
        <end position="170"/>
    </location>
    <ligand>
        <name>NAD(+)</name>
        <dbReference type="ChEBI" id="CHEBI:57540"/>
    </ligand>
</feature>
<feature type="binding site" evidence="1">
    <location>
        <begin position="193"/>
        <end position="196"/>
    </location>
    <ligand>
        <name>NAD(+)</name>
        <dbReference type="ChEBI" id="CHEBI:57540"/>
    </ligand>
</feature>
<feature type="binding site" evidence="1">
    <location>
        <begin position="226"/>
        <end position="227"/>
    </location>
    <ligand>
        <name>NAD(+)</name>
        <dbReference type="ChEBI" id="CHEBI:57540"/>
    </ligand>
</feature>
<feature type="binding site" evidence="1">
    <location>
        <begin position="246"/>
        <end position="247"/>
    </location>
    <ligand>
        <name>NAD(+)</name>
        <dbReference type="ChEBI" id="CHEBI:57540"/>
    </ligand>
</feature>
<feature type="binding site" evidence="1">
    <location>
        <begin position="269"/>
        <end position="271"/>
    </location>
    <ligand>
        <name>NAD(+)</name>
        <dbReference type="ChEBI" id="CHEBI:57540"/>
    </ligand>
</feature>
<feature type="binding site" evidence="1">
    <location>
        <begin position="349"/>
        <end position="353"/>
    </location>
    <ligand>
        <name>NAD(+)</name>
        <dbReference type="ChEBI" id="CHEBI:57540"/>
    </ligand>
</feature>
<feature type="binding site" evidence="1">
    <location>
        <begin position="400"/>
        <end position="402"/>
    </location>
    <ligand>
        <name>NAD(+)</name>
        <dbReference type="ChEBI" id="CHEBI:57540"/>
    </ligand>
</feature>
<feature type="site" description="Transition state stabilizer" evidence="3">
    <location>
        <position position="170"/>
    </location>
</feature>
<feature type="modified residue" description="N-acetylserine" evidence="2">
    <location>
        <position position="2"/>
    </location>
</feature>
<feature type="modified residue" description="N6-acetyllysine" evidence="1">
    <location>
        <position position="91"/>
    </location>
</feature>
<feature type="modified residue" description="N6-acetyllysine" evidence="1">
    <location>
        <position position="128"/>
    </location>
</feature>
<feature type="modified residue" description="N6-acetyllysine" evidence="1">
    <location>
        <position position="252"/>
    </location>
</feature>
<feature type="modified residue" description="N6-acetyllysine" evidence="1">
    <location>
        <position position="353"/>
    </location>
</feature>
<feature type="modified residue" description="N6-acetyllysine" evidence="1">
    <location>
        <position position="367"/>
    </location>
</feature>
<feature type="modified residue" description="N6-acetyllysine" evidence="1">
    <location>
        <position position="410"/>
    </location>
</feature>
<feature type="modified residue" description="Phosphoserine" evidence="1">
    <location>
        <position position="413"/>
    </location>
</feature>
<feature type="modified residue" description="N6-acetyllysine" evidence="1">
    <location>
        <position position="419"/>
    </location>
</feature>
<feature type="modified residue" description="N6-acetyllysine" evidence="1">
    <location>
        <position position="435"/>
    </location>
</feature>
<feature type="modified residue" description="N6-acetyllysine" evidence="1">
    <location>
        <position position="495"/>
    </location>
</feature>
<proteinExistence type="evidence at protein level"/>
<reference evidence="11" key="1">
    <citation type="submission" date="2010-12" db="UniProtKB">
        <authorList>
            <person name="Cederlund E."/>
            <person name="Hedlund J."/>
            <person name="Hjelmqvist L."/>
            <person name="Jonsson A."/>
            <person name="Shafqat J."/>
        </authorList>
    </citation>
    <scope>PROTEIN SEQUENCE OF 2-501</scope>
</reference>
<sequence>MSSPAQPEVPAPLANLKIQYTKIFINNEWHDSVSGKKFPVINPATEEVICHVEEGDKADIDKAVKAARQAFQIGSPWRTMDASERGRLLYKLADLMERDRLLLATLEATNGGKVFASSYLFDLGGCIKALKYCAGWADKVHGQTIPSDGDIFTYTRREPIGVCGQIIPWNFPLLMFIWKIGPALGCGNTVIVKPAEQTPLTALYMASLIKEAGFPPGVVNIVPGYGPTAGAAISSHMDIDKVAFTGSTQVGKLIKEAAGKSNLKRVTLELGGKSPCIVFADADLDTAVEFAHYGVFYHQGQCCVAASRLFVEESIYDEFVRRSVERAKKYVLGNPLNSGINQGPQIDKEQHDKILDLIESGKKEGAKLECGGGRWGNKGYFVQPTVFSNVTDDMRIAKEEIFGPVQQIMKFKSLDDVIKRANNTSYGLAAGVFTKDLDKAITVSSALQAGVVWVNCYMMLSAQCPFGGFKMSGNGRELGEHGIYEYTELKTVAIKISQKNS</sequence>